<name>RLMF_SHISS</name>
<proteinExistence type="inferred from homology"/>
<dbReference type="EC" id="2.1.1.181" evidence="1"/>
<dbReference type="EMBL" id="CP000038">
    <property type="protein sequence ID" value="AAZ87534.1"/>
    <property type="status" value="ALT_INIT"/>
    <property type="molecule type" value="Genomic_DNA"/>
</dbReference>
<dbReference type="RefSeq" id="WP_001275941.1">
    <property type="nucleotide sequence ID" value="NC_007384.1"/>
</dbReference>
<dbReference type="SMR" id="Q3Z3X8"/>
<dbReference type="GeneID" id="93776621"/>
<dbReference type="KEGG" id="ssn:SSON_0787"/>
<dbReference type="HOGENOM" id="CLU_027534_3_0_6"/>
<dbReference type="Proteomes" id="UP000002529">
    <property type="component" value="Chromosome"/>
</dbReference>
<dbReference type="GO" id="GO:0005737">
    <property type="term" value="C:cytoplasm"/>
    <property type="evidence" value="ECO:0007669"/>
    <property type="project" value="UniProtKB-SubCell"/>
</dbReference>
<dbReference type="GO" id="GO:0052907">
    <property type="term" value="F:23S rRNA (adenine(1618)-N(6))-methyltransferase activity"/>
    <property type="evidence" value="ECO:0007669"/>
    <property type="project" value="UniProtKB-EC"/>
</dbReference>
<dbReference type="GO" id="GO:0070475">
    <property type="term" value="P:rRNA base methylation"/>
    <property type="evidence" value="ECO:0007669"/>
    <property type="project" value="TreeGrafter"/>
</dbReference>
<dbReference type="FunFam" id="3.40.50.150:FF:000045">
    <property type="entry name" value="Ribosomal RNA large subunit methyltransferase F"/>
    <property type="match status" value="1"/>
</dbReference>
<dbReference type="Gene3D" id="3.40.50.150">
    <property type="entry name" value="Vaccinia Virus protein VP39"/>
    <property type="match status" value="1"/>
</dbReference>
<dbReference type="HAMAP" id="MF_01848">
    <property type="entry name" value="23SrRNA_methyltr_F"/>
    <property type="match status" value="1"/>
</dbReference>
<dbReference type="InterPro" id="IPR010286">
    <property type="entry name" value="METTL16/RlmF"/>
</dbReference>
<dbReference type="InterPro" id="IPR016909">
    <property type="entry name" value="rRNA_lsu_MeTfrase_F"/>
</dbReference>
<dbReference type="InterPro" id="IPR029063">
    <property type="entry name" value="SAM-dependent_MTases_sf"/>
</dbReference>
<dbReference type="NCBIfam" id="NF008725">
    <property type="entry name" value="PRK11727.1"/>
    <property type="match status" value="1"/>
</dbReference>
<dbReference type="PANTHER" id="PTHR13393:SF0">
    <property type="entry name" value="RNA N6-ADENOSINE-METHYLTRANSFERASE METTL16"/>
    <property type="match status" value="1"/>
</dbReference>
<dbReference type="PANTHER" id="PTHR13393">
    <property type="entry name" value="SAM-DEPENDENT METHYLTRANSFERASE"/>
    <property type="match status" value="1"/>
</dbReference>
<dbReference type="Pfam" id="PF05971">
    <property type="entry name" value="Methyltransf_10"/>
    <property type="match status" value="1"/>
</dbReference>
<dbReference type="PIRSF" id="PIRSF029038">
    <property type="entry name" value="Mtase_YbiN_prd"/>
    <property type="match status" value="1"/>
</dbReference>
<dbReference type="SUPFAM" id="SSF53335">
    <property type="entry name" value="S-adenosyl-L-methionine-dependent methyltransferases"/>
    <property type="match status" value="1"/>
</dbReference>
<keyword id="KW-0963">Cytoplasm</keyword>
<keyword id="KW-0489">Methyltransferase</keyword>
<keyword id="KW-1185">Reference proteome</keyword>
<keyword id="KW-0698">rRNA processing</keyword>
<keyword id="KW-0949">S-adenosyl-L-methionine</keyword>
<keyword id="KW-0808">Transferase</keyword>
<comment type="function">
    <text evidence="1">Specifically methylates the adenine in position 1618 of 23S rRNA.</text>
</comment>
<comment type="catalytic activity">
    <reaction evidence="1">
        <text>adenosine(1618) in 23S rRNA + S-adenosyl-L-methionine = N(6)-methyladenosine(1618) in 23S rRNA + S-adenosyl-L-homocysteine + H(+)</text>
        <dbReference type="Rhea" id="RHEA:16497"/>
        <dbReference type="Rhea" id="RHEA-COMP:10229"/>
        <dbReference type="Rhea" id="RHEA-COMP:10231"/>
        <dbReference type="ChEBI" id="CHEBI:15378"/>
        <dbReference type="ChEBI" id="CHEBI:57856"/>
        <dbReference type="ChEBI" id="CHEBI:59789"/>
        <dbReference type="ChEBI" id="CHEBI:74411"/>
        <dbReference type="ChEBI" id="CHEBI:74449"/>
        <dbReference type="EC" id="2.1.1.181"/>
    </reaction>
</comment>
<comment type="subcellular location">
    <subcellularLocation>
        <location evidence="1">Cytoplasm</location>
    </subcellularLocation>
</comment>
<comment type="similarity">
    <text evidence="1">Belongs to the methyltransferase superfamily. METTL16/RlmF family.</text>
</comment>
<comment type="sequence caution" evidence="2">
    <conflict type="erroneous initiation">
        <sequence resource="EMBL-CDS" id="AAZ87534"/>
    </conflict>
</comment>
<organism>
    <name type="scientific">Shigella sonnei (strain Ss046)</name>
    <dbReference type="NCBI Taxonomy" id="300269"/>
    <lineage>
        <taxon>Bacteria</taxon>
        <taxon>Pseudomonadati</taxon>
        <taxon>Pseudomonadota</taxon>
        <taxon>Gammaproteobacteria</taxon>
        <taxon>Enterobacterales</taxon>
        <taxon>Enterobacteriaceae</taxon>
        <taxon>Shigella</taxon>
    </lineage>
</organism>
<gene>
    <name evidence="1" type="primary">rlmF</name>
    <name type="ordered locus">SSON_0787</name>
</gene>
<protein>
    <recommendedName>
        <fullName evidence="1">Ribosomal RNA large subunit methyltransferase F</fullName>
        <ecNumber evidence="1">2.1.1.181</ecNumber>
    </recommendedName>
    <alternativeName>
        <fullName evidence="1">23S rRNA mA1618 methyltransferase</fullName>
    </alternativeName>
    <alternativeName>
        <fullName evidence="1">rRNA adenine N-6-methyltransferase</fullName>
    </alternativeName>
</protein>
<sequence length="308" mass="34180">MSAQKPGLHPRNRHHSRYDLATLCQVNPELRQFLTLTPAGEQSVDFANPLAVKALNKALLAHFYAVANWDIPDGFLCPPVPGRADYIHHLADLLAEASGTIPANASILDIGVGANCIYPLIGVHEYGWRFTGSETSSQALSSAQAIISANPGLNRAIRLRRQKESGAIFNGIIHKNEQYDATLCNPPFHDSAAAARAGSERKRRNLGLNKDDALNFGGQQQELWCEGGEVAFIKKMIEESKGFAKQVMWFTSLVSRGENLPPLYRALTDVGAVKVVKKEMAQGQKQSRFIAWTFMNDEQRRRFVNRQR</sequence>
<reference key="1">
    <citation type="journal article" date="2005" name="Nucleic Acids Res.">
        <title>Genome dynamics and diversity of Shigella species, the etiologic agents of bacillary dysentery.</title>
        <authorList>
            <person name="Yang F."/>
            <person name="Yang J."/>
            <person name="Zhang X."/>
            <person name="Chen L."/>
            <person name="Jiang Y."/>
            <person name="Yan Y."/>
            <person name="Tang X."/>
            <person name="Wang J."/>
            <person name="Xiong Z."/>
            <person name="Dong J."/>
            <person name="Xue Y."/>
            <person name="Zhu Y."/>
            <person name="Xu X."/>
            <person name="Sun L."/>
            <person name="Chen S."/>
            <person name="Nie H."/>
            <person name="Peng J."/>
            <person name="Xu J."/>
            <person name="Wang Y."/>
            <person name="Yuan Z."/>
            <person name="Wen Y."/>
            <person name="Yao Z."/>
            <person name="Shen Y."/>
            <person name="Qiang B."/>
            <person name="Hou Y."/>
            <person name="Yu J."/>
            <person name="Jin Q."/>
        </authorList>
    </citation>
    <scope>NUCLEOTIDE SEQUENCE [LARGE SCALE GENOMIC DNA]</scope>
    <source>
        <strain>Ss046</strain>
    </source>
</reference>
<evidence type="ECO:0000255" key="1">
    <source>
        <dbReference type="HAMAP-Rule" id="MF_01848"/>
    </source>
</evidence>
<evidence type="ECO:0000305" key="2"/>
<accession>Q3Z3X8</accession>
<feature type="chain" id="PRO_0000349972" description="Ribosomal RNA large subunit methyltransferase F">
    <location>
        <begin position="1"/>
        <end position="308"/>
    </location>
</feature>